<dbReference type="EC" id="1.2.1.72" evidence="1"/>
<dbReference type="EMBL" id="CP000653">
    <property type="protein sequence ID" value="ABP62002.1"/>
    <property type="molecule type" value="Genomic_DNA"/>
</dbReference>
<dbReference type="RefSeq" id="WP_015960330.1">
    <property type="nucleotide sequence ID" value="NC_009436.1"/>
</dbReference>
<dbReference type="SMR" id="A4WE72"/>
<dbReference type="STRING" id="399742.Ent638_3340"/>
<dbReference type="KEGG" id="ent:Ent638_3340"/>
<dbReference type="eggNOG" id="COG0057">
    <property type="taxonomic scope" value="Bacteria"/>
</dbReference>
<dbReference type="HOGENOM" id="CLU_030140_0_2_6"/>
<dbReference type="OrthoDB" id="9803304at2"/>
<dbReference type="UniPathway" id="UPA00244">
    <property type="reaction ID" value="UER00309"/>
</dbReference>
<dbReference type="Proteomes" id="UP000000230">
    <property type="component" value="Chromosome"/>
</dbReference>
<dbReference type="GO" id="GO:0005737">
    <property type="term" value="C:cytoplasm"/>
    <property type="evidence" value="ECO:0007669"/>
    <property type="project" value="UniProtKB-SubCell"/>
</dbReference>
<dbReference type="GO" id="GO:0048001">
    <property type="term" value="F:erythrose-4-phosphate dehydrogenase activity"/>
    <property type="evidence" value="ECO:0007669"/>
    <property type="project" value="UniProtKB-UniRule"/>
</dbReference>
<dbReference type="GO" id="GO:0051287">
    <property type="term" value="F:NAD binding"/>
    <property type="evidence" value="ECO:0007669"/>
    <property type="project" value="InterPro"/>
</dbReference>
<dbReference type="GO" id="GO:0050661">
    <property type="term" value="F:NADP binding"/>
    <property type="evidence" value="ECO:0007669"/>
    <property type="project" value="InterPro"/>
</dbReference>
<dbReference type="GO" id="GO:0006006">
    <property type="term" value="P:glucose metabolic process"/>
    <property type="evidence" value="ECO:0007669"/>
    <property type="project" value="InterPro"/>
</dbReference>
<dbReference type="GO" id="GO:0042823">
    <property type="term" value="P:pyridoxal phosphate biosynthetic process"/>
    <property type="evidence" value="ECO:0007669"/>
    <property type="project" value="UniProtKB-UniRule"/>
</dbReference>
<dbReference type="GO" id="GO:0008615">
    <property type="term" value="P:pyridoxine biosynthetic process"/>
    <property type="evidence" value="ECO:0007669"/>
    <property type="project" value="UniProtKB-UniRule"/>
</dbReference>
<dbReference type="CDD" id="cd23937">
    <property type="entry name" value="GAPDH_C_E4PDH"/>
    <property type="match status" value="1"/>
</dbReference>
<dbReference type="CDD" id="cd17892">
    <property type="entry name" value="GAPDH_N_E4PDH"/>
    <property type="match status" value="1"/>
</dbReference>
<dbReference type="FunFam" id="3.30.360.10:FF:000007">
    <property type="entry name" value="D-erythrose-4-phosphate dehydrogenase"/>
    <property type="match status" value="1"/>
</dbReference>
<dbReference type="FunFam" id="3.40.50.720:FF:000001">
    <property type="entry name" value="Glyceraldehyde-3-phosphate dehydrogenase"/>
    <property type="match status" value="1"/>
</dbReference>
<dbReference type="Gene3D" id="3.30.360.10">
    <property type="entry name" value="Dihydrodipicolinate Reductase, domain 2"/>
    <property type="match status" value="1"/>
</dbReference>
<dbReference type="Gene3D" id="3.40.50.720">
    <property type="entry name" value="NAD(P)-binding Rossmann-like Domain"/>
    <property type="match status" value="1"/>
</dbReference>
<dbReference type="HAMAP" id="MF_01640">
    <property type="entry name" value="E4P_dehydrog"/>
    <property type="match status" value="1"/>
</dbReference>
<dbReference type="InterPro" id="IPR006422">
    <property type="entry name" value="E4P_DH_bac"/>
</dbReference>
<dbReference type="InterPro" id="IPR020831">
    <property type="entry name" value="GlycerAld/Erythrose_P_DH"/>
</dbReference>
<dbReference type="InterPro" id="IPR020830">
    <property type="entry name" value="GlycerAld_3-P_DH_AS"/>
</dbReference>
<dbReference type="InterPro" id="IPR020829">
    <property type="entry name" value="GlycerAld_3-P_DH_cat"/>
</dbReference>
<dbReference type="InterPro" id="IPR020828">
    <property type="entry name" value="GlycerAld_3-P_DH_NAD(P)-bd"/>
</dbReference>
<dbReference type="InterPro" id="IPR006424">
    <property type="entry name" value="Glyceraldehyde-3-P_DH_1"/>
</dbReference>
<dbReference type="InterPro" id="IPR036291">
    <property type="entry name" value="NAD(P)-bd_dom_sf"/>
</dbReference>
<dbReference type="NCBIfam" id="TIGR01532">
    <property type="entry name" value="E4PD_g-proteo"/>
    <property type="match status" value="1"/>
</dbReference>
<dbReference type="NCBIfam" id="TIGR01534">
    <property type="entry name" value="GAPDH-I"/>
    <property type="match status" value="1"/>
</dbReference>
<dbReference type="NCBIfam" id="NF010058">
    <property type="entry name" value="PRK13535.1"/>
    <property type="match status" value="1"/>
</dbReference>
<dbReference type="PANTHER" id="PTHR43148">
    <property type="entry name" value="GLYCERALDEHYDE-3-PHOSPHATE DEHYDROGENASE 2"/>
    <property type="match status" value="1"/>
</dbReference>
<dbReference type="Pfam" id="PF02800">
    <property type="entry name" value="Gp_dh_C"/>
    <property type="match status" value="1"/>
</dbReference>
<dbReference type="Pfam" id="PF00044">
    <property type="entry name" value="Gp_dh_N"/>
    <property type="match status" value="1"/>
</dbReference>
<dbReference type="PIRSF" id="PIRSF000149">
    <property type="entry name" value="GAP_DH"/>
    <property type="match status" value="1"/>
</dbReference>
<dbReference type="PRINTS" id="PR00078">
    <property type="entry name" value="G3PDHDRGNASE"/>
</dbReference>
<dbReference type="SMART" id="SM00846">
    <property type="entry name" value="Gp_dh_N"/>
    <property type="match status" value="1"/>
</dbReference>
<dbReference type="SUPFAM" id="SSF55347">
    <property type="entry name" value="Glyceraldehyde-3-phosphate dehydrogenase-like, C-terminal domain"/>
    <property type="match status" value="1"/>
</dbReference>
<dbReference type="SUPFAM" id="SSF51735">
    <property type="entry name" value="NAD(P)-binding Rossmann-fold domains"/>
    <property type="match status" value="1"/>
</dbReference>
<dbReference type="PROSITE" id="PS00071">
    <property type="entry name" value="GAPDH"/>
    <property type="match status" value="1"/>
</dbReference>
<evidence type="ECO:0000255" key="1">
    <source>
        <dbReference type="HAMAP-Rule" id="MF_01640"/>
    </source>
</evidence>
<accession>A4WE72</accession>
<keyword id="KW-0963">Cytoplasm</keyword>
<keyword id="KW-0520">NAD</keyword>
<keyword id="KW-0560">Oxidoreductase</keyword>
<keyword id="KW-0664">Pyridoxine biosynthesis</keyword>
<feature type="chain" id="PRO_1000069894" description="D-erythrose-4-phosphate dehydrogenase">
    <location>
        <begin position="1"/>
        <end position="339"/>
    </location>
</feature>
<feature type="active site" description="Nucleophile" evidence="1">
    <location>
        <position position="155"/>
    </location>
</feature>
<feature type="binding site" evidence="1">
    <location>
        <begin position="12"/>
        <end position="13"/>
    </location>
    <ligand>
        <name>NAD(+)</name>
        <dbReference type="ChEBI" id="CHEBI:57540"/>
    </ligand>
</feature>
<feature type="binding site" evidence="1">
    <location>
        <begin position="154"/>
        <end position="156"/>
    </location>
    <ligand>
        <name>substrate</name>
    </ligand>
</feature>
<feature type="binding site" evidence="1">
    <location>
        <position position="200"/>
    </location>
    <ligand>
        <name>substrate</name>
    </ligand>
</feature>
<feature type="binding site" evidence="1">
    <location>
        <begin position="213"/>
        <end position="214"/>
    </location>
    <ligand>
        <name>substrate</name>
    </ligand>
</feature>
<feature type="binding site" evidence="1">
    <location>
        <position position="236"/>
    </location>
    <ligand>
        <name>substrate</name>
    </ligand>
</feature>
<feature type="binding site" evidence="1">
    <location>
        <position position="318"/>
    </location>
    <ligand>
        <name>NAD(+)</name>
        <dbReference type="ChEBI" id="CHEBI:57540"/>
    </ligand>
</feature>
<feature type="site" description="Activates thiol group during catalysis" evidence="1">
    <location>
        <position position="182"/>
    </location>
</feature>
<protein>
    <recommendedName>
        <fullName evidence="1">D-erythrose-4-phosphate dehydrogenase</fullName>
        <shortName evidence="1">E4PDH</shortName>
        <ecNumber evidence="1">1.2.1.72</ecNumber>
    </recommendedName>
</protein>
<sequence length="339" mass="37248">MTVRVAINGFGRIGRNVIRALYESGRRAEITVVAINELADAVGMAHLLKYDTSHGRFAWDVRQEREQLFVGDDAIRVLHEQSIDALPWRELGVDVVLDCTGVYGNREHGEAHLAAGAKKVLFSHPGGHDLDATVVYGVNHHELQAEHRIVSNASCTTNCIIPVIKLLDDAYGIESGTVTTIHSAMHDQQVIDAYHPDLRRTRAASQSIIPVDTKLAAGITRIFPQFNDRFEAIAVRVPTINVTAIDLSVTVKKPVKASEVNLLLQKAAQGSFHGIVDYTELPLVSVDFNHDPHSAIVDGTQTRVSGAHLIKTLVWCDNEWGFANRMLDTTLAMAAQGFR</sequence>
<proteinExistence type="inferred from homology"/>
<reference key="1">
    <citation type="journal article" date="2010" name="PLoS Genet.">
        <title>Genome sequence of the plant growth promoting endophytic bacterium Enterobacter sp. 638.</title>
        <authorList>
            <person name="Taghavi S."/>
            <person name="van der Lelie D."/>
            <person name="Hoffman A."/>
            <person name="Zhang Y.B."/>
            <person name="Walla M.D."/>
            <person name="Vangronsveld J."/>
            <person name="Newman L."/>
            <person name="Monchy S."/>
        </authorList>
    </citation>
    <scope>NUCLEOTIDE SEQUENCE [LARGE SCALE GENOMIC DNA]</scope>
    <source>
        <strain>638</strain>
    </source>
</reference>
<organism>
    <name type="scientific">Enterobacter sp. (strain 638)</name>
    <dbReference type="NCBI Taxonomy" id="399742"/>
    <lineage>
        <taxon>Bacteria</taxon>
        <taxon>Pseudomonadati</taxon>
        <taxon>Pseudomonadota</taxon>
        <taxon>Gammaproteobacteria</taxon>
        <taxon>Enterobacterales</taxon>
        <taxon>Enterobacteriaceae</taxon>
        <taxon>Enterobacter</taxon>
    </lineage>
</organism>
<gene>
    <name evidence="1" type="primary">epd</name>
    <name type="ordered locus">Ent638_3340</name>
</gene>
<name>E4PD_ENT38</name>
<comment type="function">
    <text evidence="1">Catalyzes the NAD-dependent conversion of D-erythrose 4-phosphate to 4-phosphoerythronate.</text>
</comment>
<comment type="catalytic activity">
    <reaction evidence="1">
        <text>D-erythrose 4-phosphate + NAD(+) + H2O = 4-phospho-D-erythronate + NADH + 2 H(+)</text>
        <dbReference type="Rhea" id="RHEA:12056"/>
        <dbReference type="ChEBI" id="CHEBI:15377"/>
        <dbReference type="ChEBI" id="CHEBI:15378"/>
        <dbReference type="ChEBI" id="CHEBI:16897"/>
        <dbReference type="ChEBI" id="CHEBI:57540"/>
        <dbReference type="ChEBI" id="CHEBI:57945"/>
        <dbReference type="ChEBI" id="CHEBI:58766"/>
        <dbReference type="EC" id="1.2.1.72"/>
    </reaction>
</comment>
<comment type="pathway">
    <text evidence="1">Cofactor biosynthesis; pyridoxine 5'-phosphate biosynthesis; pyridoxine 5'-phosphate from D-erythrose 4-phosphate: step 1/5.</text>
</comment>
<comment type="subunit">
    <text evidence="1">Homotetramer.</text>
</comment>
<comment type="subcellular location">
    <subcellularLocation>
        <location evidence="1">Cytoplasm</location>
    </subcellularLocation>
</comment>
<comment type="similarity">
    <text evidence="1">Belongs to the glyceraldehyde-3-phosphate dehydrogenase family. Epd subfamily.</text>
</comment>